<sequence>MAAKEIKFGRTAREKMLRGVDILADAVKVTLGPKGRNVIIDKSFGAPRITKDGVSVAKEIELEDKFENMGAQMVREVASKTNDIAGDGTTTATVLAQAIVREGAKAVAAGMNPMDLKRGIDLAVAEVVKDLQAKAKKINTSEEVAQVGTISANGERQVGLDIAEAMQKVGNEGVITVEEAKTAETELEVVEGMQFDRGYLSPYFVTNPEKMIADLEDVFILLHEKKLSNLQSMLPVLEAVVQTGKPLLIIAEDVEGEALATLVVNKLRGGLKIAAVKAPGFGDRRKAMLEDIAILTGGTVISEDLGIKLESVTLDMLGRAKKVSISKENTTIVDGSGAKSDIEGRVAQIKAQIEETTSDYDREKLQERLAKLAGGVAVIRVGGSTEVEVKEKKDRIDDALNATRAAVQEGIVPGGGVALLRSSVKISAKGVNDDQEAGINIVRRALQAPARQIAENAGDEASIVVGKILDKDQDNYGYNAQTGEYGDMIGMGIIDPVKVVRTALQDAASVASLLITTEAMIAELPKKDAPAMPGGMGGMGGMDMM</sequence>
<comment type="function">
    <text evidence="1">Together with its co-chaperonin GroES, plays an essential role in assisting protein folding. The GroEL-GroES system forms a nano-cage that allows encapsulation of the non-native substrate proteins and provides a physical environment optimized to promote and accelerate protein folding.</text>
</comment>
<comment type="catalytic activity">
    <reaction evidence="1">
        <text>ATP + H2O + a folded polypeptide = ADP + phosphate + an unfolded polypeptide.</text>
        <dbReference type="EC" id="5.6.1.7"/>
    </reaction>
</comment>
<comment type="subunit">
    <text evidence="1">Forms a cylinder of 14 subunits composed of two heptameric rings stacked back-to-back. Interacts with the co-chaperonin GroES.</text>
</comment>
<comment type="subcellular location">
    <subcellularLocation>
        <location evidence="1">Cytoplasm</location>
    </subcellularLocation>
</comment>
<comment type="similarity">
    <text evidence="1">Belongs to the chaperonin (HSP60) family.</text>
</comment>
<evidence type="ECO:0000255" key="1">
    <source>
        <dbReference type="HAMAP-Rule" id="MF_00600"/>
    </source>
</evidence>
<protein>
    <recommendedName>
        <fullName evidence="1">Chaperonin GroEL 1</fullName>
        <ecNumber evidence="1">5.6.1.7</ecNumber>
    </recommendedName>
    <alternativeName>
        <fullName evidence="1">60 kDa chaperonin 1</fullName>
    </alternativeName>
    <alternativeName>
        <fullName evidence="1">Chaperonin-60 1</fullName>
        <shortName evidence="1">Cpn60 1</shortName>
    </alternativeName>
</protein>
<gene>
    <name evidence="1" type="primary">groEL1</name>
    <name evidence="1" type="synonym">groL1</name>
    <name type="ordered locus">RHE_CH00828</name>
</gene>
<feature type="chain" id="PRO_0000256958" description="Chaperonin GroEL 1">
    <location>
        <begin position="1"/>
        <end position="545"/>
    </location>
</feature>
<feature type="binding site" evidence="1">
    <location>
        <begin position="30"/>
        <end position="33"/>
    </location>
    <ligand>
        <name>ATP</name>
        <dbReference type="ChEBI" id="CHEBI:30616"/>
    </ligand>
</feature>
<feature type="binding site" evidence="1">
    <location>
        <position position="51"/>
    </location>
    <ligand>
        <name>ATP</name>
        <dbReference type="ChEBI" id="CHEBI:30616"/>
    </ligand>
</feature>
<feature type="binding site" evidence="1">
    <location>
        <begin position="87"/>
        <end position="91"/>
    </location>
    <ligand>
        <name>ATP</name>
        <dbReference type="ChEBI" id="CHEBI:30616"/>
    </ligand>
</feature>
<feature type="binding site" evidence="1">
    <location>
        <position position="415"/>
    </location>
    <ligand>
        <name>ATP</name>
        <dbReference type="ChEBI" id="CHEBI:30616"/>
    </ligand>
</feature>
<feature type="binding site" evidence="1">
    <location>
        <position position="495"/>
    </location>
    <ligand>
        <name>ATP</name>
        <dbReference type="ChEBI" id="CHEBI:30616"/>
    </ligand>
</feature>
<proteinExistence type="inferred from homology"/>
<dbReference type="EC" id="5.6.1.7" evidence="1"/>
<dbReference type="EMBL" id="CP000133">
    <property type="protein sequence ID" value="ABC89639.1"/>
    <property type="molecule type" value="Genomic_DNA"/>
</dbReference>
<dbReference type="SMR" id="Q2KBZ7"/>
<dbReference type="KEGG" id="ret:RHE_CH00828"/>
<dbReference type="eggNOG" id="COG0459">
    <property type="taxonomic scope" value="Bacteria"/>
</dbReference>
<dbReference type="HOGENOM" id="CLU_016503_3_0_5"/>
<dbReference type="OrthoDB" id="9766614at2"/>
<dbReference type="Proteomes" id="UP000001936">
    <property type="component" value="Chromosome"/>
</dbReference>
<dbReference type="GO" id="GO:0005737">
    <property type="term" value="C:cytoplasm"/>
    <property type="evidence" value="ECO:0007669"/>
    <property type="project" value="UniProtKB-SubCell"/>
</dbReference>
<dbReference type="GO" id="GO:0005524">
    <property type="term" value="F:ATP binding"/>
    <property type="evidence" value="ECO:0007669"/>
    <property type="project" value="UniProtKB-UniRule"/>
</dbReference>
<dbReference type="GO" id="GO:0140662">
    <property type="term" value="F:ATP-dependent protein folding chaperone"/>
    <property type="evidence" value="ECO:0007669"/>
    <property type="project" value="InterPro"/>
</dbReference>
<dbReference type="GO" id="GO:0016853">
    <property type="term" value="F:isomerase activity"/>
    <property type="evidence" value="ECO:0007669"/>
    <property type="project" value="UniProtKB-KW"/>
</dbReference>
<dbReference type="GO" id="GO:0051082">
    <property type="term" value="F:unfolded protein binding"/>
    <property type="evidence" value="ECO:0007669"/>
    <property type="project" value="UniProtKB-UniRule"/>
</dbReference>
<dbReference type="GO" id="GO:0042026">
    <property type="term" value="P:protein refolding"/>
    <property type="evidence" value="ECO:0007669"/>
    <property type="project" value="UniProtKB-UniRule"/>
</dbReference>
<dbReference type="CDD" id="cd03344">
    <property type="entry name" value="GroEL"/>
    <property type="match status" value="1"/>
</dbReference>
<dbReference type="FunFam" id="1.10.560.10:FF:000001">
    <property type="entry name" value="60 kDa chaperonin"/>
    <property type="match status" value="1"/>
</dbReference>
<dbReference type="FunFam" id="3.50.7.10:FF:000001">
    <property type="entry name" value="60 kDa chaperonin"/>
    <property type="match status" value="1"/>
</dbReference>
<dbReference type="Gene3D" id="3.50.7.10">
    <property type="entry name" value="GroEL"/>
    <property type="match status" value="1"/>
</dbReference>
<dbReference type="Gene3D" id="1.10.560.10">
    <property type="entry name" value="GroEL-like equatorial domain"/>
    <property type="match status" value="1"/>
</dbReference>
<dbReference type="Gene3D" id="3.30.260.10">
    <property type="entry name" value="TCP-1-like chaperonin intermediate domain"/>
    <property type="match status" value="1"/>
</dbReference>
<dbReference type="HAMAP" id="MF_00600">
    <property type="entry name" value="CH60"/>
    <property type="match status" value="1"/>
</dbReference>
<dbReference type="InterPro" id="IPR018370">
    <property type="entry name" value="Chaperonin_Cpn60_CS"/>
</dbReference>
<dbReference type="InterPro" id="IPR001844">
    <property type="entry name" value="Cpn60/GroEL"/>
</dbReference>
<dbReference type="InterPro" id="IPR002423">
    <property type="entry name" value="Cpn60/GroEL/TCP-1"/>
</dbReference>
<dbReference type="InterPro" id="IPR027409">
    <property type="entry name" value="GroEL-like_apical_dom_sf"/>
</dbReference>
<dbReference type="InterPro" id="IPR027413">
    <property type="entry name" value="GROEL-like_equatorial_sf"/>
</dbReference>
<dbReference type="InterPro" id="IPR027410">
    <property type="entry name" value="TCP-1-like_intermed_sf"/>
</dbReference>
<dbReference type="NCBIfam" id="TIGR02348">
    <property type="entry name" value="GroEL"/>
    <property type="match status" value="1"/>
</dbReference>
<dbReference type="NCBIfam" id="NF000592">
    <property type="entry name" value="PRK00013.1"/>
    <property type="match status" value="1"/>
</dbReference>
<dbReference type="NCBIfam" id="NF009487">
    <property type="entry name" value="PRK12849.1"/>
    <property type="match status" value="1"/>
</dbReference>
<dbReference type="NCBIfam" id="NF009488">
    <property type="entry name" value="PRK12850.1"/>
    <property type="match status" value="1"/>
</dbReference>
<dbReference type="NCBIfam" id="NF009489">
    <property type="entry name" value="PRK12851.1"/>
    <property type="match status" value="1"/>
</dbReference>
<dbReference type="PANTHER" id="PTHR45633">
    <property type="entry name" value="60 KDA HEAT SHOCK PROTEIN, MITOCHONDRIAL"/>
    <property type="match status" value="1"/>
</dbReference>
<dbReference type="Pfam" id="PF00118">
    <property type="entry name" value="Cpn60_TCP1"/>
    <property type="match status" value="1"/>
</dbReference>
<dbReference type="PRINTS" id="PR00298">
    <property type="entry name" value="CHAPERONIN60"/>
</dbReference>
<dbReference type="SUPFAM" id="SSF52029">
    <property type="entry name" value="GroEL apical domain-like"/>
    <property type="match status" value="1"/>
</dbReference>
<dbReference type="SUPFAM" id="SSF48592">
    <property type="entry name" value="GroEL equatorial domain-like"/>
    <property type="match status" value="1"/>
</dbReference>
<dbReference type="SUPFAM" id="SSF54849">
    <property type="entry name" value="GroEL-intermediate domain like"/>
    <property type="match status" value="1"/>
</dbReference>
<dbReference type="PROSITE" id="PS00296">
    <property type="entry name" value="CHAPERONINS_CPN60"/>
    <property type="match status" value="1"/>
</dbReference>
<name>CH601_RHIEC</name>
<accession>Q2KBZ7</accession>
<organism>
    <name type="scientific">Rhizobium etli (strain ATCC 51251 / DSM 11541 / JCM 21823 / NBRC 15573 / CFN 42)</name>
    <dbReference type="NCBI Taxonomy" id="347834"/>
    <lineage>
        <taxon>Bacteria</taxon>
        <taxon>Pseudomonadati</taxon>
        <taxon>Pseudomonadota</taxon>
        <taxon>Alphaproteobacteria</taxon>
        <taxon>Hyphomicrobiales</taxon>
        <taxon>Rhizobiaceae</taxon>
        <taxon>Rhizobium/Agrobacterium group</taxon>
        <taxon>Rhizobium</taxon>
    </lineage>
</organism>
<reference key="1">
    <citation type="journal article" date="2006" name="Proc. Natl. Acad. Sci. U.S.A.">
        <title>The partitioned Rhizobium etli genome: genetic and metabolic redundancy in seven interacting replicons.</title>
        <authorList>
            <person name="Gonzalez V."/>
            <person name="Santamaria R.I."/>
            <person name="Bustos P."/>
            <person name="Hernandez-Gonzalez I."/>
            <person name="Medrano-Soto A."/>
            <person name="Moreno-Hagelsieb G."/>
            <person name="Janga S.C."/>
            <person name="Ramirez M.A."/>
            <person name="Jimenez-Jacinto V."/>
            <person name="Collado-Vides J."/>
            <person name="Davila G."/>
        </authorList>
    </citation>
    <scope>NUCLEOTIDE SEQUENCE [LARGE SCALE GENOMIC DNA]</scope>
    <source>
        <strain>ATCC 51251 / DSM 11541 / JCM 21823 / NBRC 15573 / CFN 42</strain>
    </source>
</reference>
<keyword id="KW-0067">ATP-binding</keyword>
<keyword id="KW-0143">Chaperone</keyword>
<keyword id="KW-0963">Cytoplasm</keyword>
<keyword id="KW-0413">Isomerase</keyword>
<keyword id="KW-0547">Nucleotide-binding</keyword>
<keyword id="KW-1185">Reference proteome</keyword>